<comment type="function">
    <text evidence="2">Component of the general transcription and DNA repair factor IIH (TFIIH) core complex, which is involved in general and transcription-coupled nucleotide excision repair (NER) of damaged DNA and, when complexed to TFIIK, in RNA transcription by RNA polymerase II. In NER, TFIIH acts by opening DNA around the lesion to allow the excision of the damaged oligonucleotide and its replacement by a new DNA fragment. In transcription, TFIIH has an essential role in transcription initiation. When the pre-initiation complex (PIC) has been established, TFIIH is required for promoter opening and promoter escape. Phosphorylation of the C-terminal tail (CTD) of the largest subunit of RNA polymerase II by the kinase module TFIIK controls the initiation of transcription.</text>
</comment>
<comment type="subunit">
    <text evidence="2">Component of the 7-subunit TFIIH core complex composed of XPB/SSL2, XPD/RAD3, SSL1, TFB1, TFB2, TFB4 and TFB5, which is active in NER. The core complex associates with the 3-subunit CTD-kinase module TFIIK composed of CCL1, KIN28 and TFB3 to form the 10-subunit holoenzyme (holo-TFIIH) active in transcription.</text>
</comment>
<comment type="subcellular location">
    <subcellularLocation>
        <location evidence="1">Nucleus</location>
    </subcellularLocation>
</comment>
<comment type="similarity">
    <text evidence="4">Belongs to the TFB4 family.</text>
</comment>
<accession>Q6CD24</accession>
<protein>
    <recommendedName>
        <fullName>General transcription and DNA repair factor IIH subunit TFB4</fullName>
        <shortName>TFIIH subunit TFB4</shortName>
    </recommendedName>
    <alternativeName>
        <fullName>RNA polymerase II transcription factor B subunit 4</fullName>
    </alternativeName>
</protein>
<organism>
    <name type="scientific">Yarrowia lipolytica (strain CLIB 122 / E 150)</name>
    <name type="common">Yeast</name>
    <name type="synonym">Candida lipolytica</name>
    <dbReference type="NCBI Taxonomy" id="284591"/>
    <lineage>
        <taxon>Eukaryota</taxon>
        <taxon>Fungi</taxon>
        <taxon>Dikarya</taxon>
        <taxon>Ascomycota</taxon>
        <taxon>Saccharomycotina</taxon>
        <taxon>Dipodascomycetes</taxon>
        <taxon>Dipodascales</taxon>
        <taxon>Dipodascales incertae sedis</taxon>
        <taxon>Yarrowia</taxon>
    </lineage>
</organism>
<name>TFB4_YARLI</name>
<gene>
    <name type="primary">TFB4</name>
    <name type="ordered locus">YALI0C04367g</name>
</gene>
<feature type="chain" id="PRO_0000119274" description="General transcription and DNA repair factor IIH subunit TFB4">
    <location>
        <begin position="1"/>
        <end position="340"/>
    </location>
</feature>
<feature type="zinc finger region" description="C4-type">
    <location>
        <begin position="294"/>
        <end position="313"/>
    </location>
</feature>
<feature type="region of interest" description="Disordered" evidence="3">
    <location>
        <begin position="85"/>
        <end position="117"/>
    </location>
</feature>
<feature type="compositionally biased region" description="Basic and acidic residues" evidence="3">
    <location>
        <begin position="92"/>
        <end position="103"/>
    </location>
</feature>
<proteinExistence type="inferred from homology"/>
<evidence type="ECO:0000250" key="1"/>
<evidence type="ECO:0000250" key="2">
    <source>
        <dbReference type="UniProtKB" id="Q12004"/>
    </source>
</evidence>
<evidence type="ECO:0000256" key="3">
    <source>
        <dbReference type="SAM" id="MobiDB-lite"/>
    </source>
</evidence>
<evidence type="ECO:0000305" key="4"/>
<keyword id="KW-0227">DNA damage</keyword>
<keyword id="KW-0234">DNA repair</keyword>
<keyword id="KW-0479">Metal-binding</keyword>
<keyword id="KW-0539">Nucleus</keyword>
<keyword id="KW-1185">Reference proteome</keyword>
<keyword id="KW-0804">Transcription</keyword>
<keyword id="KW-0805">Transcription regulation</keyword>
<keyword id="KW-0862">Zinc</keyword>
<keyword id="KW-0863">Zinc-finger</keyword>
<reference key="1">
    <citation type="journal article" date="2004" name="Nature">
        <title>Genome evolution in yeasts.</title>
        <authorList>
            <person name="Dujon B."/>
            <person name="Sherman D."/>
            <person name="Fischer G."/>
            <person name="Durrens P."/>
            <person name="Casaregola S."/>
            <person name="Lafontaine I."/>
            <person name="de Montigny J."/>
            <person name="Marck C."/>
            <person name="Neuveglise C."/>
            <person name="Talla E."/>
            <person name="Goffard N."/>
            <person name="Frangeul L."/>
            <person name="Aigle M."/>
            <person name="Anthouard V."/>
            <person name="Babour A."/>
            <person name="Barbe V."/>
            <person name="Barnay S."/>
            <person name="Blanchin S."/>
            <person name="Beckerich J.-M."/>
            <person name="Beyne E."/>
            <person name="Bleykasten C."/>
            <person name="Boisrame A."/>
            <person name="Boyer J."/>
            <person name="Cattolico L."/>
            <person name="Confanioleri F."/>
            <person name="de Daruvar A."/>
            <person name="Despons L."/>
            <person name="Fabre E."/>
            <person name="Fairhead C."/>
            <person name="Ferry-Dumazet H."/>
            <person name="Groppi A."/>
            <person name="Hantraye F."/>
            <person name="Hennequin C."/>
            <person name="Jauniaux N."/>
            <person name="Joyet P."/>
            <person name="Kachouri R."/>
            <person name="Kerrest A."/>
            <person name="Koszul R."/>
            <person name="Lemaire M."/>
            <person name="Lesur I."/>
            <person name="Ma L."/>
            <person name="Muller H."/>
            <person name="Nicaud J.-M."/>
            <person name="Nikolski M."/>
            <person name="Oztas S."/>
            <person name="Ozier-Kalogeropoulos O."/>
            <person name="Pellenz S."/>
            <person name="Potier S."/>
            <person name="Richard G.-F."/>
            <person name="Straub M.-L."/>
            <person name="Suleau A."/>
            <person name="Swennen D."/>
            <person name="Tekaia F."/>
            <person name="Wesolowski-Louvel M."/>
            <person name="Westhof E."/>
            <person name="Wirth B."/>
            <person name="Zeniou-Meyer M."/>
            <person name="Zivanovic Y."/>
            <person name="Bolotin-Fukuhara M."/>
            <person name="Thierry A."/>
            <person name="Bouchier C."/>
            <person name="Caudron B."/>
            <person name="Scarpelli C."/>
            <person name="Gaillardin C."/>
            <person name="Weissenbach J."/>
            <person name="Wincker P."/>
            <person name="Souciet J.-L."/>
        </authorList>
    </citation>
    <scope>NUCLEOTIDE SEQUENCE [LARGE SCALE GENOMIC DNA]</scope>
    <source>
        <strain>CLIB 122 / E 150</strain>
    </source>
</reference>
<dbReference type="EMBL" id="CR382129">
    <property type="protein sequence ID" value="CAG81737.1"/>
    <property type="molecule type" value="Genomic_DNA"/>
</dbReference>
<dbReference type="RefSeq" id="XP_501438.1">
    <property type="nucleotide sequence ID" value="XM_501438.1"/>
</dbReference>
<dbReference type="SMR" id="Q6CD24"/>
<dbReference type="FunCoup" id="Q6CD24">
    <property type="interactions" value="1205"/>
</dbReference>
<dbReference type="STRING" id="284591.Q6CD24"/>
<dbReference type="EnsemblFungi" id="CAG81737">
    <property type="protein sequence ID" value="CAG81737"/>
    <property type="gene ID" value="YALI0_C04367g"/>
</dbReference>
<dbReference type="KEGG" id="yli:2909399"/>
<dbReference type="VEuPathDB" id="FungiDB:YALI0_C04367g"/>
<dbReference type="HOGENOM" id="CLU_040211_0_0_1"/>
<dbReference type="InParanoid" id="Q6CD24"/>
<dbReference type="OMA" id="QGCDITS"/>
<dbReference type="OrthoDB" id="118309at4891"/>
<dbReference type="Proteomes" id="UP000001300">
    <property type="component" value="Chromosome C"/>
</dbReference>
<dbReference type="GO" id="GO:0000112">
    <property type="term" value="C:nucleotide-excision repair factor 3 complex"/>
    <property type="evidence" value="ECO:0007669"/>
    <property type="project" value="EnsemblFungi"/>
</dbReference>
<dbReference type="GO" id="GO:0000439">
    <property type="term" value="C:transcription factor TFIIH core complex"/>
    <property type="evidence" value="ECO:0000318"/>
    <property type="project" value="GO_Central"/>
</dbReference>
<dbReference type="GO" id="GO:0005675">
    <property type="term" value="C:transcription factor TFIIH holo complex"/>
    <property type="evidence" value="ECO:0000318"/>
    <property type="project" value="GO_Central"/>
</dbReference>
<dbReference type="GO" id="GO:0008270">
    <property type="term" value="F:zinc ion binding"/>
    <property type="evidence" value="ECO:0007669"/>
    <property type="project" value="UniProtKB-KW"/>
</dbReference>
<dbReference type="GO" id="GO:0006289">
    <property type="term" value="P:nucleotide-excision repair"/>
    <property type="evidence" value="ECO:0000318"/>
    <property type="project" value="GO_Central"/>
</dbReference>
<dbReference type="GO" id="GO:0006355">
    <property type="term" value="P:regulation of DNA-templated transcription"/>
    <property type="evidence" value="ECO:0007669"/>
    <property type="project" value="InterPro"/>
</dbReference>
<dbReference type="GO" id="GO:0006367">
    <property type="term" value="P:transcription initiation at RNA polymerase II promoter"/>
    <property type="evidence" value="ECO:0007669"/>
    <property type="project" value="EnsemblFungi"/>
</dbReference>
<dbReference type="Gene3D" id="3.40.50.410">
    <property type="entry name" value="von Willebrand factor, type A domain"/>
    <property type="match status" value="1"/>
</dbReference>
<dbReference type="InterPro" id="IPR004600">
    <property type="entry name" value="TFIIH_Tfb4/GTF2H3"/>
</dbReference>
<dbReference type="InterPro" id="IPR036465">
    <property type="entry name" value="vWFA_dom_sf"/>
</dbReference>
<dbReference type="PANTHER" id="PTHR12831:SF0">
    <property type="entry name" value="GENERAL TRANSCRIPTION FACTOR IIH SUBUNIT 3"/>
    <property type="match status" value="1"/>
</dbReference>
<dbReference type="PANTHER" id="PTHR12831">
    <property type="entry name" value="TRANSCRIPTION INITIATION FACTOR IIH TFIIH , POLYPEPTIDE 3-RELATED"/>
    <property type="match status" value="1"/>
</dbReference>
<dbReference type="Pfam" id="PF03850">
    <property type="entry name" value="Tfb4"/>
    <property type="match status" value="1"/>
</dbReference>
<sequence length="340" mass="37795">MNAIDGTSRQLKDTEDQTLDDTPSLLSIIIDAHVPSWEEIKSQISISEAVASILVFINAHLALHNSNSVNVIGYNASGARILYPPKSGVESTRSKEREERSESVSDGEQAPSKKDHSMYRQFKTVDEVVQTELWNMLNHTNYVEEEKQHNSAISGALSLALGFINKHVFVDESRMRARILLLTVGHKNETIQYIPTMNCIFAAQKLKIPVDVCKLGPGSDQVFLQQACDSTHGIYMDISEKNSKTPKGLVQYLLSGFISDPSLRPHIVLPTQSNVDFRAACFLTKQVVDIGYVCSVCLCIMSQIPSNRRCPTCDTTYSEKTLAGLGRKPLKKKKKKVVKP</sequence>